<keyword id="KW-0963">Cytoplasm</keyword>
<keyword id="KW-0240">DNA-directed RNA polymerase</keyword>
<keyword id="KW-0479">Metal-binding</keyword>
<keyword id="KW-0548">Nucleotidyltransferase</keyword>
<keyword id="KW-0804">Transcription</keyword>
<keyword id="KW-0808">Transferase</keyword>
<keyword id="KW-0862">Zinc</keyword>
<sequence>MSYKCSRCKRDVELDEYGGVRCPYCGHRVLLKERSRDVKEVSVQ</sequence>
<evidence type="ECO:0000255" key="1">
    <source>
        <dbReference type="HAMAP-Rule" id="MF_00615"/>
    </source>
</evidence>
<protein>
    <recommendedName>
        <fullName evidence="1">DNA-directed RNA polymerase subunit Rpo12</fullName>
        <ecNumber evidence="1">2.7.7.6</ecNumber>
    </recommendedName>
    <alternativeName>
        <fullName evidence="1">DNA-directed RNA polymerase subunit P</fullName>
    </alternativeName>
</protein>
<accession>B0R2Y0</accession>
<name>RPO12_HALS3</name>
<proteinExistence type="inferred from homology"/>
<reference key="1">
    <citation type="journal article" date="2008" name="Genomics">
        <title>Evolution in the laboratory: the genome of Halobacterium salinarum strain R1 compared to that of strain NRC-1.</title>
        <authorList>
            <person name="Pfeiffer F."/>
            <person name="Schuster S.C."/>
            <person name="Broicher A."/>
            <person name="Falb M."/>
            <person name="Palm P."/>
            <person name="Rodewald K."/>
            <person name="Ruepp A."/>
            <person name="Soppa J."/>
            <person name="Tittor J."/>
            <person name="Oesterhelt D."/>
        </authorList>
    </citation>
    <scope>NUCLEOTIDE SEQUENCE [LARGE SCALE GENOMIC DNA]</scope>
    <source>
        <strain>ATCC 29341 / DSM 671 / R1</strain>
    </source>
</reference>
<comment type="function">
    <text evidence="1">DNA-dependent RNA polymerase (RNAP) catalyzes the transcription of DNA into RNA using the four ribonucleoside triphosphates as substrates.</text>
</comment>
<comment type="catalytic activity">
    <reaction evidence="1">
        <text>RNA(n) + a ribonucleoside 5'-triphosphate = RNA(n+1) + diphosphate</text>
        <dbReference type="Rhea" id="RHEA:21248"/>
        <dbReference type="Rhea" id="RHEA-COMP:14527"/>
        <dbReference type="Rhea" id="RHEA-COMP:17342"/>
        <dbReference type="ChEBI" id="CHEBI:33019"/>
        <dbReference type="ChEBI" id="CHEBI:61557"/>
        <dbReference type="ChEBI" id="CHEBI:140395"/>
        <dbReference type="EC" id="2.7.7.6"/>
    </reaction>
</comment>
<comment type="cofactor">
    <cofactor evidence="1">
        <name>Zn(2+)</name>
        <dbReference type="ChEBI" id="CHEBI:29105"/>
    </cofactor>
    <text evidence="1">Binds 1 zinc ion.</text>
</comment>
<comment type="subunit">
    <text evidence="1">Part of the RNA polymerase complex.</text>
</comment>
<comment type="subcellular location">
    <subcellularLocation>
        <location evidence="1">Cytoplasm</location>
    </subcellularLocation>
</comment>
<comment type="similarity">
    <text evidence="1">Belongs to the archaeal Rpo12/eukaryotic RPC10 RNA polymerase subunit family.</text>
</comment>
<dbReference type="EC" id="2.7.7.6" evidence="1"/>
<dbReference type="EMBL" id="AM774415">
    <property type="protein sequence ID" value="CAP13090.1"/>
    <property type="molecule type" value="Genomic_DNA"/>
</dbReference>
<dbReference type="RefSeq" id="WP_010902130.1">
    <property type="nucleotide sequence ID" value="NC_010364.1"/>
</dbReference>
<dbReference type="SMR" id="B0R2Y0"/>
<dbReference type="EnsemblBacteria" id="CAP13090">
    <property type="protein sequence ID" value="CAP13090"/>
    <property type="gene ID" value="OE_1372R"/>
</dbReference>
<dbReference type="KEGG" id="hsl:OE_1372R"/>
<dbReference type="HOGENOM" id="CLU_179456_2_1_2"/>
<dbReference type="PhylomeDB" id="B0R2Y0"/>
<dbReference type="Proteomes" id="UP000001321">
    <property type="component" value="Chromosome"/>
</dbReference>
<dbReference type="GO" id="GO:0005737">
    <property type="term" value="C:cytoplasm"/>
    <property type="evidence" value="ECO:0007669"/>
    <property type="project" value="UniProtKB-SubCell"/>
</dbReference>
<dbReference type="GO" id="GO:0000428">
    <property type="term" value="C:DNA-directed RNA polymerase complex"/>
    <property type="evidence" value="ECO:0007669"/>
    <property type="project" value="UniProtKB-KW"/>
</dbReference>
<dbReference type="GO" id="GO:0003677">
    <property type="term" value="F:DNA binding"/>
    <property type="evidence" value="ECO:0007669"/>
    <property type="project" value="InterPro"/>
</dbReference>
<dbReference type="GO" id="GO:0003899">
    <property type="term" value="F:DNA-directed RNA polymerase activity"/>
    <property type="evidence" value="ECO:0007669"/>
    <property type="project" value="UniProtKB-UniRule"/>
</dbReference>
<dbReference type="GO" id="GO:0008270">
    <property type="term" value="F:zinc ion binding"/>
    <property type="evidence" value="ECO:0007669"/>
    <property type="project" value="UniProtKB-UniRule"/>
</dbReference>
<dbReference type="GO" id="GO:0006351">
    <property type="term" value="P:DNA-templated transcription"/>
    <property type="evidence" value="ECO:0007669"/>
    <property type="project" value="UniProtKB-UniRule"/>
</dbReference>
<dbReference type="Gene3D" id="2.20.28.30">
    <property type="entry name" value="RNA polymerase ii, chain L"/>
    <property type="match status" value="1"/>
</dbReference>
<dbReference type="HAMAP" id="MF_00615">
    <property type="entry name" value="RNApol_arch_Rpo12"/>
    <property type="match status" value="1"/>
</dbReference>
<dbReference type="InterPro" id="IPR006591">
    <property type="entry name" value="RNAP_P/RPABC4"/>
</dbReference>
<dbReference type="InterPro" id="IPR029040">
    <property type="entry name" value="RPABC4/Spt4"/>
</dbReference>
<dbReference type="InterPro" id="IPR023464">
    <property type="entry name" value="Rpo12"/>
</dbReference>
<dbReference type="NCBIfam" id="NF001606">
    <property type="entry name" value="PRK00398.1-3"/>
    <property type="match status" value="1"/>
</dbReference>
<dbReference type="Pfam" id="PF03604">
    <property type="entry name" value="Zn_ribbon_RPAB4"/>
    <property type="match status" value="1"/>
</dbReference>
<dbReference type="SMART" id="SM00659">
    <property type="entry name" value="RPOLCX"/>
    <property type="match status" value="1"/>
</dbReference>
<dbReference type="SUPFAM" id="SSF63393">
    <property type="entry name" value="RNA polymerase subunits"/>
    <property type="match status" value="1"/>
</dbReference>
<feature type="chain" id="PRO_1000130407" description="DNA-directed RNA polymerase subunit Rpo12">
    <location>
        <begin position="1"/>
        <end position="44"/>
    </location>
</feature>
<feature type="binding site" evidence="1">
    <location>
        <position position="8"/>
    </location>
    <ligand>
        <name>Zn(2+)</name>
        <dbReference type="ChEBI" id="CHEBI:29105"/>
    </ligand>
</feature>
<feature type="binding site" evidence="1">
    <location>
        <position position="22"/>
    </location>
    <ligand>
        <name>Zn(2+)</name>
        <dbReference type="ChEBI" id="CHEBI:29105"/>
    </ligand>
</feature>
<feature type="binding site" evidence="1">
    <location>
        <position position="25"/>
    </location>
    <ligand>
        <name>Zn(2+)</name>
        <dbReference type="ChEBI" id="CHEBI:29105"/>
    </ligand>
</feature>
<gene>
    <name evidence="1" type="primary">rpo12</name>
    <name evidence="1" type="synonym">rpoP</name>
    <name type="ordered locus">OE_1372R</name>
</gene>
<organism>
    <name type="scientific">Halobacterium salinarum (strain ATCC 29341 / DSM 671 / R1)</name>
    <dbReference type="NCBI Taxonomy" id="478009"/>
    <lineage>
        <taxon>Archaea</taxon>
        <taxon>Methanobacteriati</taxon>
        <taxon>Methanobacteriota</taxon>
        <taxon>Stenosarchaea group</taxon>
        <taxon>Halobacteria</taxon>
        <taxon>Halobacteriales</taxon>
        <taxon>Halobacteriaceae</taxon>
        <taxon>Halobacterium</taxon>
        <taxon>Halobacterium salinarum NRC-34001</taxon>
    </lineage>
</organism>